<organism>
    <name type="scientific">Pseudoalteromonas translucida (strain TAC 125)</name>
    <dbReference type="NCBI Taxonomy" id="326442"/>
    <lineage>
        <taxon>Bacteria</taxon>
        <taxon>Pseudomonadati</taxon>
        <taxon>Pseudomonadota</taxon>
        <taxon>Gammaproteobacteria</taxon>
        <taxon>Alteromonadales</taxon>
        <taxon>Pseudoalteromonadaceae</taxon>
        <taxon>Pseudoalteromonas</taxon>
    </lineage>
</organism>
<accession>Q3IFE5</accession>
<gene>
    <name type="ordered locus">PSHAa2643</name>
</gene>
<reference key="1">
    <citation type="journal article" date="2005" name="Genome Res.">
        <title>Coping with cold: the genome of the versatile marine Antarctica bacterium Pseudoalteromonas haloplanktis TAC125.</title>
        <authorList>
            <person name="Medigue C."/>
            <person name="Krin E."/>
            <person name="Pascal G."/>
            <person name="Barbe V."/>
            <person name="Bernsel A."/>
            <person name="Bertin P.N."/>
            <person name="Cheung F."/>
            <person name="Cruveiller S."/>
            <person name="D'Amico S."/>
            <person name="Duilio A."/>
            <person name="Fang G."/>
            <person name="Feller G."/>
            <person name="Ho C."/>
            <person name="Mangenot S."/>
            <person name="Marino G."/>
            <person name="Nilsson J."/>
            <person name="Parrilli E."/>
            <person name="Rocha E.P.C."/>
            <person name="Rouy Z."/>
            <person name="Sekowska A."/>
            <person name="Tutino M.L."/>
            <person name="Vallenet D."/>
            <person name="von Heijne G."/>
            <person name="Danchin A."/>
        </authorList>
    </citation>
    <scope>NUCLEOTIDE SEQUENCE [LARGE SCALE GENOMIC DNA]</scope>
    <source>
        <strain>TAC 125</strain>
    </source>
</reference>
<dbReference type="EMBL" id="CR954246">
    <property type="protein sequence ID" value="CAI87691.1"/>
    <property type="molecule type" value="Genomic_DNA"/>
</dbReference>
<dbReference type="SMR" id="Q3IFE5"/>
<dbReference type="STRING" id="326442.PSHAa2643"/>
<dbReference type="KEGG" id="pha:PSHAa2643"/>
<dbReference type="PATRIC" id="fig|326442.8.peg.2553"/>
<dbReference type="eggNOG" id="COG2003">
    <property type="taxonomic scope" value="Bacteria"/>
</dbReference>
<dbReference type="HOGENOM" id="CLU_073529_0_1_6"/>
<dbReference type="BioCyc" id="PHAL326442:PSHA_RS13005-MONOMER"/>
<dbReference type="Proteomes" id="UP000006843">
    <property type="component" value="Chromosome I"/>
</dbReference>
<dbReference type="GO" id="GO:0046872">
    <property type="term" value="F:metal ion binding"/>
    <property type="evidence" value="ECO:0007669"/>
    <property type="project" value="UniProtKB-KW"/>
</dbReference>
<dbReference type="GO" id="GO:0008237">
    <property type="term" value="F:metallopeptidase activity"/>
    <property type="evidence" value="ECO:0007669"/>
    <property type="project" value="UniProtKB-KW"/>
</dbReference>
<dbReference type="GO" id="GO:0006508">
    <property type="term" value="P:proteolysis"/>
    <property type="evidence" value="ECO:0007669"/>
    <property type="project" value="UniProtKB-KW"/>
</dbReference>
<dbReference type="CDD" id="cd08071">
    <property type="entry name" value="MPN_DUF2466"/>
    <property type="match status" value="1"/>
</dbReference>
<dbReference type="Gene3D" id="3.40.140.10">
    <property type="entry name" value="Cytidine Deaminase, domain 2"/>
    <property type="match status" value="1"/>
</dbReference>
<dbReference type="InterPro" id="IPR037518">
    <property type="entry name" value="MPN"/>
</dbReference>
<dbReference type="InterPro" id="IPR025657">
    <property type="entry name" value="RadC_JAB"/>
</dbReference>
<dbReference type="InterPro" id="IPR010994">
    <property type="entry name" value="RuvA_2-like"/>
</dbReference>
<dbReference type="InterPro" id="IPR001405">
    <property type="entry name" value="UPF0758"/>
</dbReference>
<dbReference type="InterPro" id="IPR020891">
    <property type="entry name" value="UPF0758_CS"/>
</dbReference>
<dbReference type="InterPro" id="IPR046778">
    <property type="entry name" value="UPF0758_N"/>
</dbReference>
<dbReference type="NCBIfam" id="NF000642">
    <property type="entry name" value="PRK00024.1"/>
    <property type="match status" value="1"/>
</dbReference>
<dbReference type="NCBIfam" id="TIGR00608">
    <property type="entry name" value="radc"/>
    <property type="match status" value="1"/>
</dbReference>
<dbReference type="PANTHER" id="PTHR30471">
    <property type="entry name" value="DNA REPAIR PROTEIN RADC"/>
    <property type="match status" value="1"/>
</dbReference>
<dbReference type="PANTHER" id="PTHR30471:SF3">
    <property type="entry name" value="UPF0758 PROTEIN YEES-RELATED"/>
    <property type="match status" value="1"/>
</dbReference>
<dbReference type="Pfam" id="PF04002">
    <property type="entry name" value="RadC"/>
    <property type="match status" value="1"/>
</dbReference>
<dbReference type="Pfam" id="PF20582">
    <property type="entry name" value="UPF0758_N"/>
    <property type="match status" value="1"/>
</dbReference>
<dbReference type="SUPFAM" id="SSF102712">
    <property type="entry name" value="JAB1/MPN domain"/>
    <property type="match status" value="1"/>
</dbReference>
<dbReference type="SUPFAM" id="SSF47781">
    <property type="entry name" value="RuvA domain 2-like"/>
    <property type="match status" value="1"/>
</dbReference>
<dbReference type="PROSITE" id="PS50249">
    <property type="entry name" value="MPN"/>
    <property type="match status" value="1"/>
</dbReference>
<dbReference type="PROSITE" id="PS01302">
    <property type="entry name" value="UPF0758"/>
    <property type="match status" value="1"/>
</dbReference>
<keyword id="KW-0378">Hydrolase</keyword>
<keyword id="KW-0479">Metal-binding</keyword>
<keyword id="KW-0482">Metalloprotease</keyword>
<keyword id="KW-0645">Protease</keyword>
<keyword id="KW-1185">Reference proteome</keyword>
<keyword id="KW-0862">Zinc</keyword>
<protein>
    <recommendedName>
        <fullName>UPF0758 protein PSHAa2643</fullName>
    </recommendedName>
</protein>
<sequence>MQLTSLPNSQRPREKLIEKGAKALSDAELLAIFLRTGLPGMNVIELAQHLLNENKTLHNLFNASMEEFCAQKGLGTAKYVQLQAVLELSQRYMQERCQRDAIFNSPNAVYDYLTLQMRGLQQEVFMVLYLDSQNRLIKDEILFYGTINSASVYPREVVKAALKNNAAAVIFAHNHPSGIAEPSQADKLITNKLQQALQLVDINVLDHIIVGGETCVSFAERGLI</sequence>
<evidence type="ECO:0000255" key="1">
    <source>
        <dbReference type="PROSITE-ProRule" id="PRU01182"/>
    </source>
</evidence>
<evidence type="ECO:0000305" key="2"/>
<feature type="chain" id="PRO_1000001680" description="UPF0758 protein PSHAa2643">
    <location>
        <begin position="1"/>
        <end position="224"/>
    </location>
</feature>
<feature type="domain" description="MPN" evidence="1">
    <location>
        <begin position="102"/>
        <end position="224"/>
    </location>
</feature>
<feature type="short sequence motif" description="JAMM motif" evidence="1">
    <location>
        <begin position="173"/>
        <end position="186"/>
    </location>
</feature>
<feature type="binding site" evidence="1">
    <location>
        <position position="173"/>
    </location>
    <ligand>
        <name>Zn(2+)</name>
        <dbReference type="ChEBI" id="CHEBI:29105"/>
        <note>catalytic</note>
    </ligand>
</feature>
<feature type="binding site" evidence="1">
    <location>
        <position position="175"/>
    </location>
    <ligand>
        <name>Zn(2+)</name>
        <dbReference type="ChEBI" id="CHEBI:29105"/>
        <note>catalytic</note>
    </ligand>
</feature>
<feature type="binding site" evidence="1">
    <location>
        <position position="186"/>
    </location>
    <ligand>
        <name>Zn(2+)</name>
        <dbReference type="ChEBI" id="CHEBI:29105"/>
        <note>catalytic</note>
    </ligand>
</feature>
<comment type="similarity">
    <text evidence="2">Belongs to the UPF0758 family.</text>
</comment>
<proteinExistence type="inferred from homology"/>
<name>Y2643_PSET1</name>